<dbReference type="EMBL" id="M82880">
    <property type="protein sequence ID" value="AAA25263.1"/>
    <property type="molecule type" value="Genomic_DNA"/>
</dbReference>
<dbReference type="SMR" id="Q48514"/>
<dbReference type="GO" id="GO:0003677">
    <property type="term" value="F:DNA binding"/>
    <property type="evidence" value="ECO:0007669"/>
    <property type="project" value="UniProtKB-KW"/>
</dbReference>
<dbReference type="GO" id="GO:0004803">
    <property type="term" value="F:transposase activity"/>
    <property type="evidence" value="ECO:0007669"/>
    <property type="project" value="InterPro"/>
</dbReference>
<dbReference type="GO" id="GO:0006313">
    <property type="term" value="P:DNA transposition"/>
    <property type="evidence" value="ECO:0007669"/>
    <property type="project" value="InterPro"/>
</dbReference>
<dbReference type="InterPro" id="IPR002525">
    <property type="entry name" value="Transp_IS110-like_N"/>
</dbReference>
<dbReference type="InterPro" id="IPR047650">
    <property type="entry name" value="Transpos_IS110"/>
</dbReference>
<dbReference type="NCBIfam" id="NF033542">
    <property type="entry name" value="transpos_IS110"/>
    <property type="match status" value="1"/>
</dbReference>
<dbReference type="PANTHER" id="PTHR33055:SF3">
    <property type="entry name" value="PUTATIVE TRANSPOSASE FOR IS117-RELATED"/>
    <property type="match status" value="1"/>
</dbReference>
<dbReference type="PANTHER" id="PTHR33055">
    <property type="entry name" value="TRANSPOSASE FOR INSERTION SEQUENCE ELEMENT IS1111A"/>
    <property type="match status" value="1"/>
</dbReference>
<dbReference type="Pfam" id="PF01548">
    <property type="entry name" value="DEDD_Tnp_IS110"/>
    <property type="match status" value="1"/>
</dbReference>
<evidence type="ECO:0000305" key="1"/>
<reference key="1">
    <citation type="journal article" date="1994" name="Plasmid">
        <title>Nucleotide sequence analysis of IS1533 from Leptospira borgpetersenii: identification and expression of two IS-encoded proteins.</title>
        <authorList>
            <person name="Zuerner R.L."/>
        </authorList>
    </citation>
    <scope>NUCLEOTIDE SEQUENCE [GENOMIC DNA]</scope>
    <source>
        <strain>Hardjo-Bovis</strain>
    </source>
</reference>
<comment type="function">
    <text evidence="1">Required for the transposition of the insertion element.</text>
</comment>
<comment type="similarity">
    <text evidence="1">Belongs to the transposase IS1111A/IS1328/IS1533 family.</text>
</comment>
<sequence>MKRKVYVGMDVHKETIQIAYLTSNSKEILKEQQIKHNEVQIKKFIKKLKLEWNEIHCCYEAGVTGYPLYRYLKSLGVNCILLAPGKIPRQNTDKIKTDKRDAIKLARLMRSWRIGIDSCFPVEEDEAVRDYLRSRDSLRLDLGRNRQRLMKFLLRKDIKLLPTTKYWTVSHYKWLNNLHFNNEILQETFNDYYSRVRVQEENLKAMDKKIQEIAESEPYREKVGILRCFRGVDYLTAMFLLCEVNDFKPIQNGRFVHEFSWTCSWRIFQRFQKKTNRDYVKLEVPRLRRILTEAAWQHRFPGTGSKIITARRSGQPALVVALAEKASLRLHKKFRNLQPKRKKLLK</sequence>
<keyword id="KW-0233">DNA recombination</keyword>
<keyword id="KW-0238">DNA-binding</keyword>
<keyword id="KW-0814">Transposable element</keyword>
<keyword id="KW-0815">Transposition</keyword>
<name>TRA3_LEPBO</name>
<organism>
    <name type="scientific">Leptospira borgpetersenii</name>
    <dbReference type="NCBI Taxonomy" id="174"/>
    <lineage>
        <taxon>Bacteria</taxon>
        <taxon>Pseudomonadati</taxon>
        <taxon>Spirochaetota</taxon>
        <taxon>Spirochaetia</taxon>
        <taxon>Leptospirales</taxon>
        <taxon>Leptospiraceae</taxon>
        <taxon>Leptospira</taxon>
    </lineage>
</organism>
<feature type="chain" id="PRO_0000075453" description="Transposase for insertion sequence element IS1533">
    <location>
        <begin position="1"/>
        <end position="346"/>
    </location>
</feature>
<accession>Q48514</accession>
<gene>
    <name type="primary">tnhA</name>
</gene>
<protein>
    <recommendedName>
        <fullName>Transposase for insertion sequence element IS1533</fullName>
    </recommendedName>
</protein>
<proteinExistence type="inferred from homology"/>